<dbReference type="EMBL" id="L22182">
    <property type="protein sequence ID" value="AAC36858.1"/>
    <property type="status" value="ALT_INIT"/>
    <property type="molecule type" value="Genomic_DNA"/>
</dbReference>
<dbReference type="EMBL" id="U00096">
    <property type="protein sequence ID" value="AAC75014.2"/>
    <property type="molecule type" value="Genomic_DNA"/>
</dbReference>
<dbReference type="EMBL" id="AP009048">
    <property type="protein sequence ID" value="BAA15772.2"/>
    <property type="molecule type" value="Genomic_DNA"/>
</dbReference>
<dbReference type="RefSeq" id="NP_416457.4">
    <property type="nucleotide sequence ID" value="NC_000913.3"/>
</dbReference>
<dbReference type="RefSeq" id="WP_001302429.1">
    <property type="nucleotide sequence ID" value="NZ_SSUV01000013.1"/>
</dbReference>
<dbReference type="BioGRID" id="4261043">
    <property type="interactions" value="15"/>
</dbReference>
<dbReference type="ComplexPortal" id="CPX-5885">
    <property type="entry name" value="Flagellar export complex"/>
</dbReference>
<dbReference type="FunCoup" id="P22586">
    <property type="interactions" value="47"/>
</dbReference>
<dbReference type="IntAct" id="P22586">
    <property type="interactions" value="1"/>
</dbReference>
<dbReference type="STRING" id="511145.b1947"/>
<dbReference type="PaxDb" id="511145-b1947"/>
<dbReference type="EnsemblBacteria" id="AAC75014">
    <property type="protein sequence ID" value="AAC75014"/>
    <property type="gene ID" value="b1947"/>
</dbReference>
<dbReference type="GeneID" id="75205812"/>
<dbReference type="GeneID" id="946458"/>
<dbReference type="KEGG" id="ecj:JW5316"/>
<dbReference type="KEGG" id="eco:b1947"/>
<dbReference type="KEGG" id="ecoc:C3026_11025"/>
<dbReference type="PATRIC" id="fig|1411691.4.peg.304"/>
<dbReference type="EchoBASE" id="EB1206"/>
<dbReference type="eggNOG" id="COG3190">
    <property type="taxonomic scope" value="Bacteria"/>
</dbReference>
<dbReference type="HOGENOM" id="CLU_113213_1_0_6"/>
<dbReference type="InParanoid" id="P22586"/>
<dbReference type="OMA" id="QNLVKRP"/>
<dbReference type="OrthoDB" id="6897726at2"/>
<dbReference type="PhylomeDB" id="P22586"/>
<dbReference type="BioCyc" id="EcoCyc:EG11224-MONOMER"/>
<dbReference type="PRO" id="PR:P22586"/>
<dbReference type="Proteomes" id="UP000000625">
    <property type="component" value="Chromosome"/>
</dbReference>
<dbReference type="GO" id="GO:0009288">
    <property type="term" value="C:bacterial-type flagellum"/>
    <property type="evidence" value="ECO:0000303"/>
    <property type="project" value="ComplexPortal"/>
</dbReference>
<dbReference type="GO" id="GO:0120102">
    <property type="term" value="C:bacterial-type flagellum secretion apparatus"/>
    <property type="evidence" value="ECO:0000303"/>
    <property type="project" value="ComplexPortal"/>
</dbReference>
<dbReference type="GO" id="GO:0005886">
    <property type="term" value="C:plasma membrane"/>
    <property type="evidence" value="ECO:0007669"/>
    <property type="project" value="UniProtKB-SubCell"/>
</dbReference>
<dbReference type="GO" id="GO:0030257">
    <property type="term" value="C:type III protein secretion system complex"/>
    <property type="evidence" value="ECO:0000303"/>
    <property type="project" value="ComplexPortal"/>
</dbReference>
<dbReference type="GO" id="GO:0044781">
    <property type="term" value="P:bacterial-type flagellum organization"/>
    <property type="evidence" value="ECO:0007669"/>
    <property type="project" value="InterPro"/>
</dbReference>
<dbReference type="GO" id="GO:0071973">
    <property type="term" value="P:bacterial-type flagellum-dependent cell motility"/>
    <property type="evidence" value="ECO:0000303"/>
    <property type="project" value="ComplexPortal"/>
</dbReference>
<dbReference type="GO" id="GO:0006935">
    <property type="term" value="P:chemotaxis"/>
    <property type="evidence" value="ECO:0000303"/>
    <property type="project" value="ComplexPortal"/>
</dbReference>
<dbReference type="GO" id="GO:0030254">
    <property type="term" value="P:protein secretion by the type III secretion system"/>
    <property type="evidence" value="ECO:0000303"/>
    <property type="project" value="ComplexPortal"/>
</dbReference>
<dbReference type="InterPro" id="IPR022781">
    <property type="entry name" value="Flagellar_biosynth_FliO"/>
</dbReference>
<dbReference type="InterPro" id="IPR052205">
    <property type="entry name" value="FliO/MopB"/>
</dbReference>
<dbReference type="NCBIfam" id="TIGR03500">
    <property type="entry name" value="FliO_TIGR"/>
    <property type="match status" value="1"/>
</dbReference>
<dbReference type="PANTHER" id="PTHR38766">
    <property type="entry name" value="FLAGELLAR PROTEIN FLIO"/>
    <property type="match status" value="1"/>
</dbReference>
<dbReference type="PANTHER" id="PTHR38766:SF1">
    <property type="entry name" value="FLAGELLAR PROTEIN FLIO"/>
    <property type="match status" value="1"/>
</dbReference>
<dbReference type="Pfam" id="PF04347">
    <property type="entry name" value="FliO"/>
    <property type="match status" value="1"/>
</dbReference>
<organism>
    <name type="scientific">Escherichia coli (strain K12)</name>
    <dbReference type="NCBI Taxonomy" id="83333"/>
    <lineage>
        <taxon>Bacteria</taxon>
        <taxon>Pseudomonadati</taxon>
        <taxon>Pseudomonadota</taxon>
        <taxon>Gammaproteobacteria</taxon>
        <taxon>Enterobacterales</taxon>
        <taxon>Enterobacteriaceae</taxon>
        <taxon>Escherichia</taxon>
    </lineage>
</organism>
<name>FLIO_ECOLI</name>
<keyword id="KW-0975">Bacterial flagellum</keyword>
<keyword id="KW-1003">Cell membrane</keyword>
<keyword id="KW-0145">Chemotaxis</keyword>
<keyword id="KW-0283">Flagellar rotation</keyword>
<keyword id="KW-0472">Membrane</keyword>
<keyword id="KW-1185">Reference proteome</keyword>
<keyword id="KW-0812">Transmembrane</keyword>
<keyword id="KW-1133">Transmembrane helix</keyword>
<proteinExistence type="inferred from homology"/>
<reference key="1">
    <citation type="journal article" date="1994" name="J. Bacteriol.">
        <title>Molecular characterization, nucleotide sequence, and expression of the fliO, fliP, fliQ, and fliR genes of Escherichia coli.</title>
        <authorList>
            <person name="Malakooti J."/>
            <person name="Ely B."/>
            <person name="Matsumura P."/>
        </authorList>
    </citation>
    <scope>NUCLEOTIDE SEQUENCE [GENOMIC DNA]</scope>
    <source>
        <strain>K12</strain>
    </source>
</reference>
<reference key="2">
    <citation type="journal article" date="1996" name="DNA Res.">
        <title>A 460-kb DNA sequence of the Escherichia coli K-12 genome corresponding to the 40.1-50.0 min region on the linkage map.</title>
        <authorList>
            <person name="Itoh T."/>
            <person name="Aiba H."/>
            <person name="Baba T."/>
            <person name="Fujita K."/>
            <person name="Hayashi K."/>
            <person name="Inada T."/>
            <person name="Isono K."/>
            <person name="Kasai H."/>
            <person name="Kimura S."/>
            <person name="Kitakawa M."/>
            <person name="Kitagawa M."/>
            <person name="Makino K."/>
            <person name="Miki T."/>
            <person name="Mizobuchi K."/>
            <person name="Mori H."/>
            <person name="Mori T."/>
            <person name="Motomura K."/>
            <person name="Nakade S."/>
            <person name="Nakamura Y."/>
            <person name="Nashimoto H."/>
            <person name="Nishio Y."/>
            <person name="Oshima T."/>
            <person name="Saito N."/>
            <person name="Sampei G."/>
            <person name="Seki Y."/>
            <person name="Sivasundaram S."/>
            <person name="Tagami H."/>
            <person name="Takeda J."/>
            <person name="Takemoto K."/>
            <person name="Wada C."/>
            <person name="Yamamoto Y."/>
            <person name="Horiuchi T."/>
        </authorList>
    </citation>
    <scope>NUCLEOTIDE SEQUENCE [LARGE SCALE GENOMIC DNA]</scope>
    <source>
        <strain>K12 / W3110 / ATCC 27325 / DSM 5911</strain>
    </source>
</reference>
<reference key="3">
    <citation type="journal article" date="1997" name="Science">
        <title>The complete genome sequence of Escherichia coli K-12.</title>
        <authorList>
            <person name="Blattner F.R."/>
            <person name="Plunkett G. III"/>
            <person name="Bloch C.A."/>
            <person name="Perna N.T."/>
            <person name="Burland V."/>
            <person name="Riley M."/>
            <person name="Collado-Vides J."/>
            <person name="Glasner J.D."/>
            <person name="Rode C.K."/>
            <person name="Mayhew G.F."/>
            <person name="Gregor J."/>
            <person name="Davis N.W."/>
            <person name="Kirkpatrick H.A."/>
            <person name="Goeden M.A."/>
            <person name="Rose D.J."/>
            <person name="Mau B."/>
            <person name="Shao Y."/>
        </authorList>
    </citation>
    <scope>NUCLEOTIDE SEQUENCE [LARGE SCALE GENOMIC DNA]</scope>
    <source>
        <strain>K12 / MG1655 / ATCC 47076</strain>
    </source>
</reference>
<reference key="4">
    <citation type="journal article" date="2006" name="Mol. Syst. Biol.">
        <title>Highly accurate genome sequences of Escherichia coli K-12 strains MG1655 and W3110.</title>
        <authorList>
            <person name="Hayashi K."/>
            <person name="Morooka N."/>
            <person name="Yamamoto Y."/>
            <person name="Fujita K."/>
            <person name="Isono K."/>
            <person name="Choi S."/>
            <person name="Ohtsubo E."/>
            <person name="Baba T."/>
            <person name="Wanner B.L."/>
            <person name="Mori H."/>
            <person name="Horiuchi T."/>
        </authorList>
    </citation>
    <scope>NUCLEOTIDE SEQUENCE [LARGE SCALE GENOMIC DNA]</scope>
    <source>
        <strain>K12 / W3110 / ATCC 27325 / DSM 5911</strain>
    </source>
</reference>
<comment type="subcellular location">
    <subcellularLocation>
        <location evidence="3">Cell membrane</location>
        <topology evidence="3">Single-pass membrane protein</topology>
    </subcellularLocation>
    <subcellularLocation>
        <location evidence="1">Bacterial flagellum basal body</location>
    </subcellularLocation>
</comment>
<comment type="similarity">
    <text evidence="3">Belongs to the FliO/MopB family.</text>
</comment>
<comment type="sequence caution" evidence="3">
    <conflict type="erroneous initiation">
        <sequence resource="EMBL-CDS" id="AAC36858"/>
    </conflict>
    <text>Truncated N-terminus.</text>
</comment>
<gene>
    <name type="primary">fliO</name>
    <name type="synonym">flaP</name>
    <name type="synonym">flbD</name>
    <name type="ordered locus">b1947</name>
    <name type="ordered locus">JW5316</name>
</gene>
<accession>P22586</accession>
<accession>P33132</accession>
<feature type="chain" id="PRO_0000206843" description="Flagellar protein FliO">
    <location>
        <begin position="1"/>
        <end position="121"/>
    </location>
</feature>
<feature type="transmembrane region" description="Helical" evidence="2">
    <location>
        <begin position="19"/>
        <end position="39"/>
    </location>
</feature>
<feature type="sequence conflict" description="In Ref. 1; AAC36858." evidence="3" ref="1">
    <original>A</original>
    <variation>R</variation>
    <location>
        <position position="15"/>
    </location>
</feature>
<feature type="sequence conflict" description="In Ref. 1; AAC36858." evidence="3" ref="1">
    <original>L</original>
    <variation>V</variation>
    <location>
        <position position="18"/>
    </location>
</feature>
<sequence>MNNHATVQSSAPVSAAPLLQVSGALIAIIALILAAAWLVKRLGFAPKRTGVNGLKISASASLGARERVVVVDVEDARLVLGVTAGQINLLHKLPPSAPTEEIPQTDFQSVMKNLLKRSGRS</sequence>
<protein>
    <recommendedName>
        <fullName>Flagellar protein FliO</fullName>
    </recommendedName>
</protein>
<evidence type="ECO:0000250" key="1"/>
<evidence type="ECO:0000255" key="2"/>
<evidence type="ECO:0000305" key="3"/>